<comment type="function">
    <text evidence="1 3">Subunit 8, of the mitochondrial membrane ATP synthase complex (F(1)F(0) ATP synthase or Complex V) that produces ATP from ADP in the presence of a proton gradient across the membrane which is generated by electron transport complexes of the respiratory chain. ATP synthase complex consist of a soluble F(1) head domain - the catalytic core - and a membrane F(1) domain - the membrane proton channel. These two domains are linked by a central stalk rotating inside the F(1) region and a stationary peripheral stalk. During catalysis, ATP synthesis in the catalytic domain of F(1) is coupled via a rotary mechanism of the central stalk subunits to proton translocation (By similarity). In vivo, can only synthesize ATP although its ATP hydrolase activity can be activated artificially in vitro (By similarity). Part of the complex F(0) domain (By similarity).</text>
</comment>
<comment type="subunit">
    <text evidence="1">Component of the ATP synthase complex composed at least of ATP5F1A/subunit alpha, ATP5F1B/subunit beta, ATP5MC1/subunit c (homooctomer), MT-ATP6/subunit a, MT-ATP8/subunit 8, ATP5ME/subunit e, ATP5MF/subunit f, ATP5MG/subunit g, ATP5MK/subunit k, ATP5MJ/subunit j, ATP5F1C/subunit gamma, ATP5F1D/subunit delta, ATP5F1E/subunit epsilon, ATP5PF/subunit F6, ATP5PB/subunit b, ATP5PD/subunit d, ATP5PO/subunit OSCP. ATP synthase complex consists of a soluble F(1) head domain (subunits alpha(3) and beta(3)) - the catalytic core - and a membrane F(0) domain - the membrane proton channel (subunits c, a, 8, e, f, g, k and j). These two domains are linked by a central stalk (subunits gamma, delta, and epsilon) rotating inside the F1 region and a stationary peripheral stalk (subunits F6, b, d, and OSCP). Interacts with PRICKLE3.</text>
</comment>
<comment type="subcellular location">
    <subcellularLocation>
        <location>Mitochondrion membrane</location>
        <topology>Single-pass membrane protein</topology>
    </subcellularLocation>
</comment>
<comment type="similarity">
    <text evidence="5">Belongs to the ATPase protein 8 family.</text>
</comment>
<sequence length="68" mass="7993">MPQLNTTVWPTMIAPMLLTLFLITQLKVLNTNYHLPPLPKTMKMKNFCKPWEPKWTKIYSLHSLPPQS</sequence>
<accession>Q34571</accession>
<geneLocation type="mitochondrion"/>
<gene>
    <name evidence="1" type="primary">MT-ATP8</name>
    <name type="synonym">ATP8</name>
    <name type="synonym">ATPASE8</name>
    <name type="synonym">MTATP8</name>
</gene>
<protein>
    <recommendedName>
        <fullName evidence="1">ATP synthase F(0) complex subunit 8</fullName>
    </recommendedName>
    <alternativeName>
        <fullName>A6L</fullName>
    </alternativeName>
    <alternativeName>
        <fullName>F-ATPase subunit 8</fullName>
    </alternativeName>
</protein>
<feature type="chain" id="PRO_0000195531" description="ATP synthase F(0) complex subunit 8">
    <location>
        <begin position="1"/>
        <end position="68"/>
    </location>
</feature>
<feature type="transmembrane region" description="Helical" evidence="4">
    <location>
        <begin position="8"/>
        <end position="24"/>
    </location>
</feature>
<feature type="modified residue" description="N6-acetyllysine; alternate" evidence="2">
    <location>
        <position position="54"/>
    </location>
</feature>
<feature type="modified residue" description="N6-succinyllysine; alternate" evidence="2">
    <location>
        <position position="54"/>
    </location>
</feature>
<feature type="modified residue" description="N6-acetyllysine" evidence="2">
    <location>
        <position position="57"/>
    </location>
</feature>
<keyword id="KW-0007">Acetylation</keyword>
<keyword id="KW-0066">ATP synthesis</keyword>
<keyword id="KW-0138">CF(0)</keyword>
<keyword id="KW-0375">Hydrogen ion transport</keyword>
<keyword id="KW-0406">Ion transport</keyword>
<keyword id="KW-0472">Membrane</keyword>
<keyword id="KW-0496">Mitochondrion</keyword>
<keyword id="KW-1185">Reference proteome</keyword>
<keyword id="KW-0812">Transmembrane</keyword>
<keyword id="KW-1133">Transmembrane helix</keyword>
<keyword id="KW-0813">Transport</keyword>
<evidence type="ECO:0000250" key="1">
    <source>
        <dbReference type="UniProtKB" id="P03928"/>
    </source>
</evidence>
<evidence type="ECO:0000250" key="2">
    <source>
        <dbReference type="UniProtKB" id="P03930"/>
    </source>
</evidence>
<evidence type="ECO:0000250" key="3">
    <source>
        <dbReference type="UniProtKB" id="P19483"/>
    </source>
</evidence>
<evidence type="ECO:0000255" key="4"/>
<evidence type="ECO:0000305" key="5"/>
<reference key="1">
    <citation type="journal article" date="1995" name="Proc. Natl. Acad. Sci. U.S.A.">
        <title>Recent African origin of modern humans revealed by complete sequences of hominoid mitochondrial DNAs.</title>
        <authorList>
            <person name="Horai S."/>
            <person name="Hayasaka K."/>
            <person name="Kondo R."/>
            <person name="Tsugane K."/>
            <person name="Takahata N."/>
        </authorList>
    </citation>
    <scope>NUCLEOTIDE SEQUENCE [GENOMIC DNA]</scope>
</reference>
<dbReference type="EMBL" id="D38114">
    <property type="protein sequence ID" value="BAA07304.1"/>
    <property type="molecule type" value="Genomic_DNA"/>
</dbReference>
<dbReference type="PIR" id="E59153">
    <property type="entry name" value="E59153"/>
</dbReference>
<dbReference type="PIR" id="T14024">
    <property type="entry name" value="T14024"/>
</dbReference>
<dbReference type="RefSeq" id="NP_008216.1">
    <property type="nucleotide sequence ID" value="NC_001645.1"/>
</dbReference>
<dbReference type="SMR" id="Q34571"/>
<dbReference type="FunCoup" id="Q34571">
    <property type="interactions" value="526"/>
</dbReference>
<dbReference type="STRING" id="9593.ENSGGOP00000027294"/>
<dbReference type="GeneID" id="807890"/>
<dbReference type="CTD" id="4509"/>
<dbReference type="eggNOG" id="ENOG502T21P">
    <property type="taxonomic scope" value="Eukaryota"/>
</dbReference>
<dbReference type="InParanoid" id="Q34571"/>
<dbReference type="Proteomes" id="UP000001519">
    <property type="component" value="Mitochondrion"/>
</dbReference>
<dbReference type="GO" id="GO:0031966">
    <property type="term" value="C:mitochondrial membrane"/>
    <property type="evidence" value="ECO:0007669"/>
    <property type="project" value="UniProtKB-SubCell"/>
</dbReference>
<dbReference type="GO" id="GO:0045259">
    <property type="term" value="C:proton-transporting ATP synthase complex"/>
    <property type="evidence" value="ECO:0000250"/>
    <property type="project" value="UniProtKB"/>
</dbReference>
<dbReference type="GO" id="GO:0015078">
    <property type="term" value="F:proton transmembrane transporter activity"/>
    <property type="evidence" value="ECO:0007669"/>
    <property type="project" value="InterPro"/>
</dbReference>
<dbReference type="GO" id="GO:0015986">
    <property type="term" value="P:proton motive force-driven ATP synthesis"/>
    <property type="evidence" value="ECO:0007669"/>
    <property type="project" value="InterPro"/>
</dbReference>
<dbReference type="InterPro" id="IPR039017">
    <property type="entry name" value="ATP8_mammal"/>
</dbReference>
<dbReference type="InterPro" id="IPR001421">
    <property type="entry name" value="ATP8_metazoa"/>
</dbReference>
<dbReference type="PANTHER" id="PTHR13722">
    <property type="entry name" value="ATP SYNTHASE PROTEIN 8"/>
    <property type="match status" value="1"/>
</dbReference>
<dbReference type="PANTHER" id="PTHR13722:SF0">
    <property type="entry name" value="ATP SYNTHASE PROTEIN 8"/>
    <property type="match status" value="1"/>
</dbReference>
<dbReference type="Pfam" id="PF00895">
    <property type="entry name" value="ATP-synt_8"/>
    <property type="match status" value="1"/>
</dbReference>
<name>ATP8_GORGO</name>
<proteinExistence type="inferred from homology"/>
<organism>
    <name type="scientific">Gorilla gorilla gorilla</name>
    <name type="common">Western lowland gorilla</name>
    <dbReference type="NCBI Taxonomy" id="9595"/>
    <lineage>
        <taxon>Eukaryota</taxon>
        <taxon>Metazoa</taxon>
        <taxon>Chordata</taxon>
        <taxon>Craniata</taxon>
        <taxon>Vertebrata</taxon>
        <taxon>Euteleostomi</taxon>
        <taxon>Mammalia</taxon>
        <taxon>Eutheria</taxon>
        <taxon>Euarchontoglires</taxon>
        <taxon>Primates</taxon>
        <taxon>Haplorrhini</taxon>
        <taxon>Catarrhini</taxon>
        <taxon>Hominidae</taxon>
        <taxon>Gorilla</taxon>
    </lineage>
</organism>